<feature type="chain" id="PRO_0000387344" description="tRNA1(Val) (adenine(37)-N6)-methyltransferase">
    <location>
        <begin position="1"/>
        <end position="234"/>
    </location>
</feature>
<keyword id="KW-0963">Cytoplasm</keyword>
<keyword id="KW-0489">Methyltransferase</keyword>
<keyword id="KW-0949">S-adenosyl-L-methionine</keyword>
<keyword id="KW-0808">Transferase</keyword>
<keyword id="KW-0819">tRNA processing</keyword>
<protein>
    <recommendedName>
        <fullName evidence="1">tRNA1(Val) (adenine(37)-N6)-methyltransferase</fullName>
        <ecNumber evidence="1">2.1.1.223</ecNumber>
    </recommendedName>
    <alternativeName>
        <fullName evidence="1">tRNA m6A37 methyltransferase</fullName>
    </alternativeName>
</protein>
<proteinExistence type="inferred from homology"/>
<sequence>MPNPYFSFKQFTVYHDRCAMKVGTDGVLLGAWADVVSARNILDIGTGTGLISLMMAQRCNARIRAVDIDADAVEQARGNVAASPWQDRIEVELQDICHFTSETLFDVIVSNPPYFTDSLKCPGKQRNIARHTDFLDFDKLAGSAARLLHPEGVFSVIIPADGKESFLMAATRYGLHLSHQTFIHTKPGSEPKRVLLAFKFSVDKCVIDDLTIELSRHVYSEEYIALTKEFYLNM</sequence>
<evidence type="ECO:0000255" key="1">
    <source>
        <dbReference type="HAMAP-Rule" id="MF_01872"/>
    </source>
</evidence>
<dbReference type="EC" id="2.1.1.223" evidence="1"/>
<dbReference type="EMBL" id="CP000139">
    <property type="protein sequence ID" value="ABR40796.1"/>
    <property type="molecule type" value="Genomic_DNA"/>
</dbReference>
<dbReference type="RefSeq" id="WP_005842277.1">
    <property type="nucleotide sequence ID" value="NZ_CAXVNH010000010.1"/>
</dbReference>
<dbReference type="SMR" id="A6L532"/>
<dbReference type="STRING" id="435590.BVU_3164"/>
<dbReference type="PaxDb" id="435590-BVU_3164"/>
<dbReference type="GeneID" id="5304125"/>
<dbReference type="KEGG" id="bvu:BVU_3164"/>
<dbReference type="eggNOG" id="COG4123">
    <property type="taxonomic scope" value="Bacteria"/>
</dbReference>
<dbReference type="HOGENOM" id="CLU_061983_0_0_10"/>
<dbReference type="BioCyc" id="BVUL435590:G1G59-3287-MONOMER"/>
<dbReference type="Proteomes" id="UP000002861">
    <property type="component" value="Chromosome"/>
</dbReference>
<dbReference type="GO" id="GO:0005737">
    <property type="term" value="C:cytoplasm"/>
    <property type="evidence" value="ECO:0007669"/>
    <property type="project" value="UniProtKB-SubCell"/>
</dbReference>
<dbReference type="GO" id="GO:0003676">
    <property type="term" value="F:nucleic acid binding"/>
    <property type="evidence" value="ECO:0007669"/>
    <property type="project" value="InterPro"/>
</dbReference>
<dbReference type="GO" id="GO:0016430">
    <property type="term" value="F:tRNA (adenine-N6)-methyltransferase activity"/>
    <property type="evidence" value="ECO:0007669"/>
    <property type="project" value="UniProtKB-UniRule"/>
</dbReference>
<dbReference type="GO" id="GO:0032259">
    <property type="term" value="P:methylation"/>
    <property type="evidence" value="ECO:0007669"/>
    <property type="project" value="UniProtKB-KW"/>
</dbReference>
<dbReference type="GO" id="GO:0008033">
    <property type="term" value="P:tRNA processing"/>
    <property type="evidence" value="ECO:0007669"/>
    <property type="project" value="UniProtKB-UniRule"/>
</dbReference>
<dbReference type="CDD" id="cd02440">
    <property type="entry name" value="AdoMet_MTases"/>
    <property type="match status" value="1"/>
</dbReference>
<dbReference type="Gene3D" id="3.40.50.150">
    <property type="entry name" value="Vaccinia Virus protein VP39"/>
    <property type="match status" value="1"/>
</dbReference>
<dbReference type="HAMAP" id="MF_01872">
    <property type="entry name" value="tRNA_methyltr_YfiC"/>
    <property type="match status" value="1"/>
</dbReference>
<dbReference type="InterPro" id="IPR002052">
    <property type="entry name" value="DNA_methylase_N6_adenine_CS"/>
</dbReference>
<dbReference type="InterPro" id="IPR029063">
    <property type="entry name" value="SAM-dependent_MTases_sf"/>
</dbReference>
<dbReference type="InterPro" id="IPR007848">
    <property type="entry name" value="Small_mtfrase_dom"/>
</dbReference>
<dbReference type="InterPro" id="IPR050210">
    <property type="entry name" value="tRNA_Adenine-N(6)_MTase"/>
</dbReference>
<dbReference type="InterPro" id="IPR022882">
    <property type="entry name" value="tRNA_adenine-N6_MeTrfase"/>
</dbReference>
<dbReference type="PANTHER" id="PTHR47739">
    <property type="entry name" value="TRNA1(VAL) (ADENINE(37)-N6)-METHYLTRANSFERASE"/>
    <property type="match status" value="1"/>
</dbReference>
<dbReference type="PANTHER" id="PTHR47739:SF1">
    <property type="entry name" value="TRNA1(VAL) (ADENINE(37)-N6)-METHYLTRANSFERASE"/>
    <property type="match status" value="1"/>
</dbReference>
<dbReference type="Pfam" id="PF05175">
    <property type="entry name" value="MTS"/>
    <property type="match status" value="1"/>
</dbReference>
<dbReference type="SUPFAM" id="SSF53335">
    <property type="entry name" value="S-adenosyl-L-methionine-dependent methyltransferases"/>
    <property type="match status" value="1"/>
</dbReference>
<dbReference type="PROSITE" id="PS00092">
    <property type="entry name" value="N6_MTASE"/>
    <property type="match status" value="1"/>
</dbReference>
<accession>A6L532</accession>
<gene>
    <name type="ordered locus">BVU_3164</name>
</gene>
<comment type="function">
    <text evidence="1">Specifically methylates the adenine in position 37 of tRNA(1)(Val) (anticodon cmo5UAC).</text>
</comment>
<comment type="catalytic activity">
    <reaction evidence="1">
        <text>adenosine(37) in tRNA1(Val) + S-adenosyl-L-methionine = N(6)-methyladenosine(37) in tRNA1(Val) + S-adenosyl-L-homocysteine + H(+)</text>
        <dbReference type="Rhea" id="RHEA:43160"/>
        <dbReference type="Rhea" id="RHEA-COMP:10369"/>
        <dbReference type="Rhea" id="RHEA-COMP:10370"/>
        <dbReference type="ChEBI" id="CHEBI:15378"/>
        <dbReference type="ChEBI" id="CHEBI:57856"/>
        <dbReference type="ChEBI" id="CHEBI:59789"/>
        <dbReference type="ChEBI" id="CHEBI:74411"/>
        <dbReference type="ChEBI" id="CHEBI:74449"/>
        <dbReference type="EC" id="2.1.1.223"/>
    </reaction>
</comment>
<comment type="subcellular location">
    <subcellularLocation>
        <location evidence="1">Cytoplasm</location>
    </subcellularLocation>
</comment>
<comment type="similarity">
    <text evidence="1">Belongs to the methyltransferase superfamily. tRNA (adenine-N(6)-)-methyltransferase family.</text>
</comment>
<name>TRMN6_PHOV8</name>
<organism>
    <name type="scientific">Phocaeicola vulgatus (strain ATCC 8482 / DSM 1447 / JCM 5826 / CCUG 4940 / NBRC 14291 / NCTC 11154)</name>
    <name type="common">Bacteroides vulgatus</name>
    <dbReference type="NCBI Taxonomy" id="435590"/>
    <lineage>
        <taxon>Bacteria</taxon>
        <taxon>Pseudomonadati</taxon>
        <taxon>Bacteroidota</taxon>
        <taxon>Bacteroidia</taxon>
        <taxon>Bacteroidales</taxon>
        <taxon>Bacteroidaceae</taxon>
        <taxon>Phocaeicola</taxon>
    </lineage>
</organism>
<reference key="1">
    <citation type="journal article" date="2007" name="PLoS Biol.">
        <title>Evolution of symbiotic bacteria in the distal human intestine.</title>
        <authorList>
            <person name="Xu J."/>
            <person name="Mahowald M.A."/>
            <person name="Ley R.E."/>
            <person name="Lozupone C.A."/>
            <person name="Hamady M."/>
            <person name="Martens E.C."/>
            <person name="Henrissat B."/>
            <person name="Coutinho P.M."/>
            <person name="Minx P."/>
            <person name="Latreille P."/>
            <person name="Cordum H."/>
            <person name="Van Brunt A."/>
            <person name="Kim K."/>
            <person name="Fulton R.S."/>
            <person name="Fulton L.A."/>
            <person name="Clifton S.W."/>
            <person name="Wilson R.K."/>
            <person name="Knight R.D."/>
            <person name="Gordon J.I."/>
        </authorList>
    </citation>
    <scope>NUCLEOTIDE SEQUENCE [LARGE SCALE GENOMIC DNA]</scope>
    <source>
        <strain>ATCC 8482 / DSM 1447 / JCM 5826 / CCUG 4940 / NBRC 14291 / NCTC 11154</strain>
    </source>
</reference>